<evidence type="ECO:0000305" key="1"/>
<proteinExistence type="evidence at protein level"/>
<keyword id="KW-0158">Chromosome</keyword>
<keyword id="KW-0903">Direct protein sequencing</keyword>
<keyword id="KW-0238">DNA-binding</keyword>
<keyword id="KW-0539">Nucleus</keyword>
<keyword id="KW-1185">Reference proteome</keyword>
<organism>
    <name type="scientific">Triticum aestivum</name>
    <name type="common">Wheat</name>
    <dbReference type="NCBI Taxonomy" id="4565"/>
    <lineage>
        <taxon>Eukaryota</taxon>
        <taxon>Viridiplantae</taxon>
        <taxon>Streptophyta</taxon>
        <taxon>Embryophyta</taxon>
        <taxon>Tracheophyta</taxon>
        <taxon>Spermatophyta</taxon>
        <taxon>Magnoliopsida</taxon>
        <taxon>Liliopsida</taxon>
        <taxon>Poales</taxon>
        <taxon>Poaceae</taxon>
        <taxon>BOP clade</taxon>
        <taxon>Pooideae</taxon>
        <taxon>Triticodae</taxon>
        <taxon>Triticeae</taxon>
        <taxon>Triticinae</taxon>
        <taxon>Triticum</taxon>
    </lineage>
</organism>
<name>H13_WHEAT</name>
<protein>
    <recommendedName>
        <fullName>Histone H1.3</fullName>
    </recommendedName>
</protein>
<sequence>MVSEAITALKERTGSMLTQIKKLVAAGKLTK</sequence>
<feature type="chain" id="PRO_0000195960" description="Histone H1.3">
    <location>
        <begin position="1" status="less than"/>
        <end position="31" status="greater than"/>
    </location>
</feature>
<feature type="non-consecutive residues" evidence="1">
    <location>
        <begin position="15"/>
        <end position="16"/>
    </location>
</feature>
<feature type="non-terminal residue">
    <location>
        <position position="1"/>
    </location>
</feature>
<feature type="non-terminal residue">
    <location>
        <position position="31"/>
    </location>
</feature>
<dbReference type="PIR" id="B23605">
    <property type="entry name" value="B23605"/>
</dbReference>
<dbReference type="SMR" id="P15872"/>
<dbReference type="Proteomes" id="UP000019116">
    <property type="component" value="Unplaced"/>
</dbReference>
<dbReference type="GO" id="GO:0000786">
    <property type="term" value="C:nucleosome"/>
    <property type="evidence" value="ECO:0007669"/>
    <property type="project" value="InterPro"/>
</dbReference>
<dbReference type="GO" id="GO:0005634">
    <property type="term" value="C:nucleus"/>
    <property type="evidence" value="ECO:0007669"/>
    <property type="project" value="UniProtKB-SubCell"/>
</dbReference>
<dbReference type="GO" id="GO:0003677">
    <property type="term" value="F:DNA binding"/>
    <property type="evidence" value="ECO:0007669"/>
    <property type="project" value="UniProtKB-KW"/>
</dbReference>
<dbReference type="GO" id="GO:0006334">
    <property type="term" value="P:nucleosome assembly"/>
    <property type="evidence" value="ECO:0007669"/>
    <property type="project" value="InterPro"/>
</dbReference>
<dbReference type="Gene3D" id="1.10.10.10">
    <property type="entry name" value="Winged helix-like DNA-binding domain superfamily/Winged helix DNA-binding domain"/>
    <property type="match status" value="1"/>
</dbReference>
<dbReference type="InterPro" id="IPR005818">
    <property type="entry name" value="Histone_H1/H5_H15"/>
</dbReference>
<dbReference type="InterPro" id="IPR036388">
    <property type="entry name" value="WH-like_DNA-bd_sf"/>
</dbReference>
<dbReference type="Pfam" id="PF00538">
    <property type="entry name" value="Linker_histone"/>
    <property type="match status" value="1"/>
</dbReference>
<reference key="1">
    <citation type="journal article" date="1986" name="FEBS Lett.">
        <title>Variants of wheat histone H1 with N- and C-terminal extensions.</title>
        <authorList>
            <person name="Brandt W.F."/>
            <person name="von Holt C."/>
        </authorList>
    </citation>
    <scope>PROTEIN SEQUENCE</scope>
    <source>
        <tissue>Germ</tissue>
    </source>
</reference>
<comment type="function">
    <text>Histones H1 are necessary for the condensation of nucleosome chains into higher-order structures.</text>
</comment>
<comment type="subcellular location">
    <subcellularLocation>
        <location>Nucleus</location>
    </subcellularLocation>
    <subcellularLocation>
        <location>Chromosome</location>
    </subcellularLocation>
</comment>
<comment type="similarity">
    <text evidence="1">Belongs to the histone H1/H5 family.</text>
</comment>
<accession>P15872</accession>